<sequence length="946" mass="106711">MIGALARKLFGSANDRRVKGYQTRVAAINALEPEVAALSDEALRARTAEFRAELAAGKTLDDLLVPAFATVREAAKRTLGQRHFDVQLIGGMVLHEGDIAEMKTGEGKTLVATLAVYLNALAGKGVHVVTVNDYLAKRDSGWMGQIYGFLGMTTGVIVHGLDDAQRQAAYACDITYGTNNEYGFDYLRDNMKYRLEDMVQRGHNFAIVDEVDSILIDEARTPLIISGPLDDRSDFYNTIDTFIPRLDKSDYDVDEKQRTVTLTEAGMEKIETLLRDAGQLRGESLYDVENVSVVHHVNQALRAHALFQRDKDYIVRNDEVVIIDEFTGRMMQGRRYSEGLHQALEAKEHVTVQPENQTLASITFQNYFRMYDKLAGMTGTASTEADEFFDIYKLEVVEIPTNLPIARLDEDDEVYRTQQEKYAAILAEVERANKRMQPVLVGTASIEKSEVLAEYLKKNGYKQIDFTDPKGMDKLYAAARAGKPAKLFAVLNARFHEQEAYIVAEAGVPGAITIATNMAGRGTDIKLGGSLEMRIQQEAAHITDEAERAAKITEIKADIERFRDIVLKAEDEIEIEPAKGNKPAKTAKRPGGLYIIGSERHESRRIDNQLRGRSGRQGDPGRSKFFLSLEDDLMRIFGSDKLDTMLTRLGLKEGEAIIHPWINKALEKAQQKVEARNFDIRKNLLKFDDVQNDQRKVIFDQRIELMKEDSVAETVTDMRHTYIEDLVAKYVPEHAYAEQWDVAGLKAEVERVVGLDIPVDEWAKEEGIADEELITRLERVFDEHMAAKVGQWGSDVMRYAEKSILLQTLDHLWREHLVMLDHLRQVIGLRGYGQRDPLQEYKSEAFNLFQEMSSHLREAVTAQLMRVEIIPPDQPQELPPMEVHKMDPDTGQDEMALANVTLAPAQTTDKADRDPNKPETWGKVGRNEDCPCGSGKKYKHCHGRYA</sequence>
<protein>
    <recommendedName>
        <fullName evidence="1">Protein translocase subunit SecA</fullName>
        <ecNumber evidence="1">7.4.2.8</ecNumber>
    </recommendedName>
</protein>
<organism>
    <name type="scientific">Rhodopseudomonas palustris (strain TIE-1)</name>
    <dbReference type="NCBI Taxonomy" id="395960"/>
    <lineage>
        <taxon>Bacteria</taxon>
        <taxon>Pseudomonadati</taxon>
        <taxon>Pseudomonadota</taxon>
        <taxon>Alphaproteobacteria</taxon>
        <taxon>Hyphomicrobiales</taxon>
        <taxon>Nitrobacteraceae</taxon>
        <taxon>Rhodopseudomonas</taxon>
    </lineage>
</organism>
<keyword id="KW-0067">ATP-binding</keyword>
<keyword id="KW-0997">Cell inner membrane</keyword>
<keyword id="KW-1003">Cell membrane</keyword>
<keyword id="KW-0963">Cytoplasm</keyword>
<keyword id="KW-0472">Membrane</keyword>
<keyword id="KW-0479">Metal-binding</keyword>
<keyword id="KW-0547">Nucleotide-binding</keyword>
<keyword id="KW-0653">Protein transport</keyword>
<keyword id="KW-1278">Translocase</keyword>
<keyword id="KW-0811">Translocation</keyword>
<keyword id="KW-0813">Transport</keyword>
<keyword id="KW-0862">Zinc</keyword>
<proteinExistence type="inferred from homology"/>
<comment type="function">
    <text evidence="1">Part of the Sec protein translocase complex. Interacts with the SecYEG preprotein conducting channel. Has a central role in coupling the hydrolysis of ATP to the transfer of proteins into and across the cell membrane, serving both as a receptor for the preprotein-SecB complex and as an ATP-driven molecular motor driving the stepwise translocation of polypeptide chains across the membrane.</text>
</comment>
<comment type="catalytic activity">
    <reaction evidence="1">
        <text>ATP + H2O + cellular proteinSide 1 = ADP + phosphate + cellular proteinSide 2.</text>
        <dbReference type="EC" id="7.4.2.8"/>
    </reaction>
</comment>
<comment type="cofactor">
    <cofactor evidence="1">
        <name>Zn(2+)</name>
        <dbReference type="ChEBI" id="CHEBI:29105"/>
    </cofactor>
    <text evidence="1">May bind 1 zinc ion per subunit.</text>
</comment>
<comment type="subunit">
    <text evidence="1">Monomer and homodimer. Part of the essential Sec protein translocation apparatus which comprises SecA, SecYEG and auxiliary proteins SecDF-YajC and YidC.</text>
</comment>
<comment type="subcellular location">
    <subcellularLocation>
        <location evidence="1">Cell inner membrane</location>
        <topology evidence="1">Peripheral membrane protein</topology>
        <orientation evidence="1">Cytoplasmic side</orientation>
    </subcellularLocation>
    <subcellularLocation>
        <location evidence="1">Cytoplasm</location>
    </subcellularLocation>
    <text evidence="1">Distribution is 50-50.</text>
</comment>
<comment type="similarity">
    <text evidence="1">Belongs to the SecA family.</text>
</comment>
<reference key="1">
    <citation type="submission" date="2008-05" db="EMBL/GenBank/DDBJ databases">
        <title>Complete sequence of Rhodopseudomonas palustris TIE-1.</title>
        <authorList>
            <consortium name="US DOE Joint Genome Institute"/>
            <person name="Lucas S."/>
            <person name="Copeland A."/>
            <person name="Lapidus A."/>
            <person name="Glavina del Rio T."/>
            <person name="Dalin E."/>
            <person name="Tice H."/>
            <person name="Pitluck S."/>
            <person name="Chain P."/>
            <person name="Malfatti S."/>
            <person name="Shin M."/>
            <person name="Vergez L."/>
            <person name="Lang D."/>
            <person name="Schmutz J."/>
            <person name="Larimer F."/>
            <person name="Land M."/>
            <person name="Hauser L."/>
            <person name="Kyrpides N."/>
            <person name="Mikhailova N."/>
            <person name="Emerson D."/>
            <person name="Newman D.K."/>
            <person name="Roden E."/>
            <person name="Richardson P."/>
        </authorList>
    </citation>
    <scope>NUCLEOTIDE SEQUENCE [LARGE SCALE GENOMIC DNA]</scope>
    <source>
        <strain>TIE-1</strain>
    </source>
</reference>
<accession>B3QBB7</accession>
<name>SECA_RHOPT</name>
<dbReference type="EC" id="7.4.2.8" evidence="1"/>
<dbReference type="EMBL" id="CP001096">
    <property type="protein sequence ID" value="ACE99070.1"/>
    <property type="molecule type" value="Genomic_DNA"/>
</dbReference>
<dbReference type="RefSeq" id="WP_011156078.1">
    <property type="nucleotide sequence ID" value="NC_011004.1"/>
</dbReference>
<dbReference type="SMR" id="B3QBB7"/>
<dbReference type="GeneID" id="66891528"/>
<dbReference type="KEGG" id="rpt:Rpal_0511"/>
<dbReference type="HOGENOM" id="CLU_005314_3_0_5"/>
<dbReference type="OrthoDB" id="9805579at2"/>
<dbReference type="Proteomes" id="UP000001725">
    <property type="component" value="Chromosome"/>
</dbReference>
<dbReference type="GO" id="GO:0031522">
    <property type="term" value="C:cell envelope Sec protein transport complex"/>
    <property type="evidence" value="ECO:0007669"/>
    <property type="project" value="TreeGrafter"/>
</dbReference>
<dbReference type="GO" id="GO:0005829">
    <property type="term" value="C:cytosol"/>
    <property type="evidence" value="ECO:0007669"/>
    <property type="project" value="TreeGrafter"/>
</dbReference>
<dbReference type="GO" id="GO:0005886">
    <property type="term" value="C:plasma membrane"/>
    <property type="evidence" value="ECO:0007669"/>
    <property type="project" value="UniProtKB-SubCell"/>
</dbReference>
<dbReference type="GO" id="GO:0005524">
    <property type="term" value="F:ATP binding"/>
    <property type="evidence" value="ECO:0007669"/>
    <property type="project" value="UniProtKB-UniRule"/>
</dbReference>
<dbReference type="GO" id="GO:0046872">
    <property type="term" value="F:metal ion binding"/>
    <property type="evidence" value="ECO:0007669"/>
    <property type="project" value="UniProtKB-KW"/>
</dbReference>
<dbReference type="GO" id="GO:0008564">
    <property type="term" value="F:protein-exporting ATPase activity"/>
    <property type="evidence" value="ECO:0007669"/>
    <property type="project" value="UniProtKB-EC"/>
</dbReference>
<dbReference type="GO" id="GO:0065002">
    <property type="term" value="P:intracellular protein transmembrane transport"/>
    <property type="evidence" value="ECO:0007669"/>
    <property type="project" value="UniProtKB-UniRule"/>
</dbReference>
<dbReference type="GO" id="GO:0017038">
    <property type="term" value="P:protein import"/>
    <property type="evidence" value="ECO:0007669"/>
    <property type="project" value="InterPro"/>
</dbReference>
<dbReference type="GO" id="GO:0006605">
    <property type="term" value="P:protein targeting"/>
    <property type="evidence" value="ECO:0007669"/>
    <property type="project" value="UniProtKB-UniRule"/>
</dbReference>
<dbReference type="GO" id="GO:0043952">
    <property type="term" value="P:protein transport by the Sec complex"/>
    <property type="evidence" value="ECO:0007669"/>
    <property type="project" value="TreeGrafter"/>
</dbReference>
<dbReference type="CDD" id="cd17928">
    <property type="entry name" value="DEXDc_SecA"/>
    <property type="match status" value="1"/>
</dbReference>
<dbReference type="CDD" id="cd18803">
    <property type="entry name" value="SF2_C_secA"/>
    <property type="match status" value="1"/>
</dbReference>
<dbReference type="FunFam" id="3.40.50.300:FF:000246">
    <property type="entry name" value="Preprotein translocase subunit SecA"/>
    <property type="match status" value="1"/>
</dbReference>
<dbReference type="FunFam" id="3.90.1440.10:FF:000001">
    <property type="entry name" value="Preprotein translocase subunit SecA"/>
    <property type="match status" value="1"/>
</dbReference>
<dbReference type="FunFam" id="1.10.3060.10:FF:000003">
    <property type="entry name" value="Protein translocase subunit SecA"/>
    <property type="match status" value="1"/>
</dbReference>
<dbReference type="FunFam" id="3.40.50.300:FF:000334">
    <property type="entry name" value="Protein translocase subunit SecA"/>
    <property type="match status" value="1"/>
</dbReference>
<dbReference type="FunFam" id="3.40.50.300:FF:001790">
    <property type="entry name" value="Protein translocase subunit SecA"/>
    <property type="match status" value="1"/>
</dbReference>
<dbReference type="Gene3D" id="3.10.450.50">
    <property type="match status" value="1"/>
</dbReference>
<dbReference type="Gene3D" id="1.10.3060.10">
    <property type="entry name" value="Helical scaffold and wing domains of SecA"/>
    <property type="match status" value="1"/>
</dbReference>
<dbReference type="Gene3D" id="3.40.50.300">
    <property type="entry name" value="P-loop containing nucleotide triphosphate hydrolases"/>
    <property type="match status" value="2"/>
</dbReference>
<dbReference type="Gene3D" id="3.90.1440.10">
    <property type="entry name" value="SecA, preprotein cross-linking domain"/>
    <property type="match status" value="1"/>
</dbReference>
<dbReference type="HAMAP" id="MF_01382">
    <property type="entry name" value="SecA"/>
    <property type="match status" value="1"/>
</dbReference>
<dbReference type="InterPro" id="IPR014001">
    <property type="entry name" value="Helicase_ATP-bd"/>
</dbReference>
<dbReference type="InterPro" id="IPR027417">
    <property type="entry name" value="P-loop_NTPase"/>
</dbReference>
<dbReference type="InterPro" id="IPR004027">
    <property type="entry name" value="SEC_C_motif"/>
</dbReference>
<dbReference type="InterPro" id="IPR000185">
    <property type="entry name" value="SecA"/>
</dbReference>
<dbReference type="InterPro" id="IPR020937">
    <property type="entry name" value="SecA_CS"/>
</dbReference>
<dbReference type="InterPro" id="IPR011115">
    <property type="entry name" value="SecA_DEAD"/>
</dbReference>
<dbReference type="InterPro" id="IPR014018">
    <property type="entry name" value="SecA_motor_DEAD"/>
</dbReference>
<dbReference type="InterPro" id="IPR011130">
    <property type="entry name" value="SecA_preprotein_X-link_dom"/>
</dbReference>
<dbReference type="InterPro" id="IPR044722">
    <property type="entry name" value="SecA_SF2_C"/>
</dbReference>
<dbReference type="InterPro" id="IPR011116">
    <property type="entry name" value="SecA_Wing/Scaffold"/>
</dbReference>
<dbReference type="InterPro" id="IPR036266">
    <property type="entry name" value="SecA_Wing/Scaffold_sf"/>
</dbReference>
<dbReference type="InterPro" id="IPR036670">
    <property type="entry name" value="SecA_X-link_sf"/>
</dbReference>
<dbReference type="NCBIfam" id="NF009538">
    <property type="entry name" value="PRK12904.1"/>
    <property type="match status" value="1"/>
</dbReference>
<dbReference type="NCBIfam" id="TIGR00963">
    <property type="entry name" value="secA"/>
    <property type="match status" value="1"/>
</dbReference>
<dbReference type="PANTHER" id="PTHR30612:SF0">
    <property type="entry name" value="CHLOROPLAST PROTEIN-TRANSPORTING ATPASE"/>
    <property type="match status" value="1"/>
</dbReference>
<dbReference type="PANTHER" id="PTHR30612">
    <property type="entry name" value="SECA INNER MEMBRANE COMPONENT OF SEC PROTEIN SECRETION SYSTEM"/>
    <property type="match status" value="1"/>
</dbReference>
<dbReference type="Pfam" id="PF21090">
    <property type="entry name" value="P-loop_SecA"/>
    <property type="match status" value="1"/>
</dbReference>
<dbReference type="Pfam" id="PF02810">
    <property type="entry name" value="SEC-C"/>
    <property type="match status" value="1"/>
</dbReference>
<dbReference type="Pfam" id="PF07517">
    <property type="entry name" value="SecA_DEAD"/>
    <property type="match status" value="1"/>
</dbReference>
<dbReference type="Pfam" id="PF01043">
    <property type="entry name" value="SecA_PP_bind"/>
    <property type="match status" value="1"/>
</dbReference>
<dbReference type="Pfam" id="PF07516">
    <property type="entry name" value="SecA_SW"/>
    <property type="match status" value="1"/>
</dbReference>
<dbReference type="PRINTS" id="PR00906">
    <property type="entry name" value="SECA"/>
</dbReference>
<dbReference type="SMART" id="SM00957">
    <property type="entry name" value="SecA_DEAD"/>
    <property type="match status" value="1"/>
</dbReference>
<dbReference type="SMART" id="SM00958">
    <property type="entry name" value="SecA_PP_bind"/>
    <property type="match status" value="1"/>
</dbReference>
<dbReference type="SUPFAM" id="SSF81886">
    <property type="entry name" value="Helical scaffold and wing domains of SecA"/>
    <property type="match status" value="1"/>
</dbReference>
<dbReference type="SUPFAM" id="SSF52540">
    <property type="entry name" value="P-loop containing nucleoside triphosphate hydrolases"/>
    <property type="match status" value="2"/>
</dbReference>
<dbReference type="SUPFAM" id="SSF81767">
    <property type="entry name" value="Pre-protein crosslinking domain of SecA"/>
    <property type="match status" value="1"/>
</dbReference>
<dbReference type="PROSITE" id="PS01312">
    <property type="entry name" value="SECA"/>
    <property type="match status" value="1"/>
</dbReference>
<dbReference type="PROSITE" id="PS51196">
    <property type="entry name" value="SECA_MOTOR_DEAD"/>
    <property type="match status" value="1"/>
</dbReference>
<evidence type="ECO:0000255" key="1">
    <source>
        <dbReference type="HAMAP-Rule" id="MF_01382"/>
    </source>
</evidence>
<evidence type="ECO:0000256" key="2">
    <source>
        <dbReference type="SAM" id="MobiDB-lite"/>
    </source>
</evidence>
<feature type="chain" id="PRO_1000145052" description="Protein translocase subunit SecA">
    <location>
        <begin position="1"/>
        <end position="946"/>
    </location>
</feature>
<feature type="region of interest" description="Disordered" evidence="2">
    <location>
        <begin position="904"/>
        <end position="933"/>
    </location>
</feature>
<feature type="binding site" evidence="1">
    <location>
        <position position="87"/>
    </location>
    <ligand>
        <name>ATP</name>
        <dbReference type="ChEBI" id="CHEBI:30616"/>
    </ligand>
</feature>
<feature type="binding site" evidence="1">
    <location>
        <begin position="105"/>
        <end position="109"/>
    </location>
    <ligand>
        <name>ATP</name>
        <dbReference type="ChEBI" id="CHEBI:30616"/>
    </ligand>
</feature>
<feature type="binding site" evidence="1">
    <location>
        <position position="524"/>
    </location>
    <ligand>
        <name>ATP</name>
        <dbReference type="ChEBI" id="CHEBI:30616"/>
    </ligand>
</feature>
<feature type="binding site" evidence="1">
    <location>
        <position position="930"/>
    </location>
    <ligand>
        <name>Zn(2+)</name>
        <dbReference type="ChEBI" id="CHEBI:29105"/>
    </ligand>
</feature>
<feature type="binding site" evidence="1">
    <location>
        <position position="932"/>
    </location>
    <ligand>
        <name>Zn(2+)</name>
        <dbReference type="ChEBI" id="CHEBI:29105"/>
    </ligand>
</feature>
<feature type="binding site" evidence="1">
    <location>
        <position position="941"/>
    </location>
    <ligand>
        <name>Zn(2+)</name>
        <dbReference type="ChEBI" id="CHEBI:29105"/>
    </ligand>
</feature>
<feature type="binding site" evidence="1">
    <location>
        <position position="942"/>
    </location>
    <ligand>
        <name>Zn(2+)</name>
        <dbReference type="ChEBI" id="CHEBI:29105"/>
    </ligand>
</feature>
<gene>
    <name evidence="1" type="primary">secA</name>
    <name type="ordered locus">Rpal_0511</name>
</gene>